<dbReference type="EC" id="1.3.98.5" evidence="1"/>
<dbReference type="EMBL" id="AL596171">
    <property type="protein sequence ID" value="CAC97447.1"/>
    <property type="molecule type" value="Genomic_DNA"/>
</dbReference>
<dbReference type="PIR" id="AG1709">
    <property type="entry name" value="AG1709"/>
</dbReference>
<dbReference type="SMR" id="Q929Q6"/>
<dbReference type="STRING" id="272626.gene:17566576"/>
<dbReference type="KEGG" id="lin:lin2218"/>
<dbReference type="eggNOG" id="COG3253">
    <property type="taxonomic scope" value="Bacteria"/>
</dbReference>
<dbReference type="HOGENOM" id="CLU_063226_1_0_9"/>
<dbReference type="OrthoDB" id="9773646at2"/>
<dbReference type="UniPathway" id="UPA00252"/>
<dbReference type="Proteomes" id="UP000002513">
    <property type="component" value="Chromosome"/>
</dbReference>
<dbReference type="GO" id="GO:0020037">
    <property type="term" value="F:heme binding"/>
    <property type="evidence" value="ECO:0007669"/>
    <property type="project" value="InterPro"/>
</dbReference>
<dbReference type="GO" id="GO:0046872">
    <property type="term" value="F:metal ion binding"/>
    <property type="evidence" value="ECO:0007669"/>
    <property type="project" value="UniProtKB-KW"/>
</dbReference>
<dbReference type="GO" id="GO:0016634">
    <property type="term" value="F:oxidoreductase activity, acting on the CH-CH group of donors, oxygen as acceptor"/>
    <property type="evidence" value="ECO:0007669"/>
    <property type="project" value="UniProtKB-UniRule"/>
</dbReference>
<dbReference type="GO" id="GO:0004601">
    <property type="term" value="F:peroxidase activity"/>
    <property type="evidence" value="ECO:0007669"/>
    <property type="project" value="InterPro"/>
</dbReference>
<dbReference type="GO" id="GO:0006785">
    <property type="term" value="P:heme B biosynthetic process"/>
    <property type="evidence" value="ECO:0007669"/>
    <property type="project" value="UniProtKB-UniRule"/>
</dbReference>
<dbReference type="Gene3D" id="3.30.70.1030">
    <property type="entry name" value="Apc35880, domain 1"/>
    <property type="match status" value="2"/>
</dbReference>
<dbReference type="HAMAP" id="MF_01442">
    <property type="entry name" value="Coproheme_decarbox_1"/>
    <property type="match status" value="1"/>
</dbReference>
<dbReference type="InterPro" id="IPR031332">
    <property type="entry name" value="CHDC"/>
</dbReference>
<dbReference type="InterPro" id="IPR010644">
    <property type="entry name" value="ChdC/CLD"/>
</dbReference>
<dbReference type="InterPro" id="IPR011008">
    <property type="entry name" value="Dimeric_a/b-barrel"/>
</dbReference>
<dbReference type="NCBIfam" id="NF008913">
    <property type="entry name" value="PRK12276.1"/>
    <property type="match status" value="1"/>
</dbReference>
<dbReference type="PANTHER" id="PTHR36843:SF1">
    <property type="entry name" value="COPROHEME DECARBOXYLASE"/>
    <property type="match status" value="1"/>
</dbReference>
<dbReference type="PANTHER" id="PTHR36843">
    <property type="entry name" value="HEME-DEPENDENT PEROXIDASE YWFI-RELATED"/>
    <property type="match status" value="1"/>
</dbReference>
<dbReference type="Pfam" id="PF06778">
    <property type="entry name" value="Chlor_dismutase"/>
    <property type="match status" value="1"/>
</dbReference>
<dbReference type="SUPFAM" id="SSF54909">
    <property type="entry name" value="Dimeric alpha+beta barrel"/>
    <property type="match status" value="1"/>
</dbReference>
<organism>
    <name type="scientific">Listeria innocua serovar 6a (strain ATCC BAA-680 / CLIP 11262)</name>
    <dbReference type="NCBI Taxonomy" id="272626"/>
    <lineage>
        <taxon>Bacteria</taxon>
        <taxon>Bacillati</taxon>
        <taxon>Bacillota</taxon>
        <taxon>Bacilli</taxon>
        <taxon>Bacillales</taxon>
        <taxon>Listeriaceae</taxon>
        <taxon>Listeria</taxon>
    </lineage>
</organism>
<name>CHDC_LISIN</name>
<keyword id="KW-0349">Heme</keyword>
<keyword id="KW-0350">Heme biosynthesis</keyword>
<keyword id="KW-0408">Iron</keyword>
<keyword id="KW-0479">Metal-binding</keyword>
<keyword id="KW-0560">Oxidoreductase</keyword>
<comment type="function">
    <text evidence="1">Involved in coproporphyrin-dependent heme b biosynthesis. Catalyzes the decarboxylation of Fe-coproporphyrin III (coproheme) to heme b (protoheme IX), the last step of the pathway. The reaction occurs in a stepwise manner with a three-propionate intermediate.</text>
</comment>
<comment type="catalytic activity">
    <reaction evidence="1">
        <text>Fe-coproporphyrin III + 2 H2O2 + 2 H(+) = heme b + 2 CO2 + 4 H2O</text>
        <dbReference type="Rhea" id="RHEA:56516"/>
        <dbReference type="ChEBI" id="CHEBI:15377"/>
        <dbReference type="ChEBI" id="CHEBI:15378"/>
        <dbReference type="ChEBI" id="CHEBI:16240"/>
        <dbReference type="ChEBI" id="CHEBI:16526"/>
        <dbReference type="ChEBI" id="CHEBI:60344"/>
        <dbReference type="ChEBI" id="CHEBI:68438"/>
        <dbReference type="EC" id="1.3.98.5"/>
    </reaction>
    <physiologicalReaction direction="left-to-right" evidence="1">
        <dbReference type="Rhea" id="RHEA:56517"/>
    </physiologicalReaction>
</comment>
<comment type="catalytic activity">
    <reaction evidence="1">
        <text>Fe-coproporphyrin III + H2O2 + H(+) = harderoheme III + CO2 + 2 H2O</text>
        <dbReference type="Rhea" id="RHEA:57940"/>
        <dbReference type="ChEBI" id="CHEBI:15377"/>
        <dbReference type="ChEBI" id="CHEBI:15378"/>
        <dbReference type="ChEBI" id="CHEBI:16240"/>
        <dbReference type="ChEBI" id="CHEBI:16526"/>
        <dbReference type="ChEBI" id="CHEBI:68438"/>
        <dbReference type="ChEBI" id="CHEBI:142463"/>
    </reaction>
    <physiologicalReaction direction="left-to-right" evidence="1">
        <dbReference type="Rhea" id="RHEA:57941"/>
    </physiologicalReaction>
</comment>
<comment type="catalytic activity">
    <reaction evidence="1">
        <text>harderoheme III + H2O2 + H(+) = heme b + CO2 + 2 H2O</text>
        <dbReference type="Rhea" id="RHEA:57944"/>
        <dbReference type="ChEBI" id="CHEBI:15377"/>
        <dbReference type="ChEBI" id="CHEBI:15378"/>
        <dbReference type="ChEBI" id="CHEBI:16240"/>
        <dbReference type="ChEBI" id="CHEBI:16526"/>
        <dbReference type="ChEBI" id="CHEBI:60344"/>
        <dbReference type="ChEBI" id="CHEBI:142463"/>
    </reaction>
    <physiologicalReaction direction="left-to-right" evidence="1">
        <dbReference type="Rhea" id="RHEA:57945"/>
    </physiologicalReaction>
</comment>
<comment type="cofactor">
    <cofactor evidence="1">
        <name>Fe-coproporphyrin III</name>
        <dbReference type="ChEBI" id="CHEBI:68438"/>
    </cofactor>
    <text evidence="1">Fe-coproporphyrin III acts both as a substrate and a redox cofactor.</text>
</comment>
<comment type="pathway">
    <text evidence="1">Porphyrin-containing compound metabolism; protoheme biosynthesis.</text>
</comment>
<comment type="similarity">
    <text evidence="1">Belongs to the ChdC family. Type 1 subfamily.</text>
</comment>
<reference key="1">
    <citation type="journal article" date="2001" name="Science">
        <title>Comparative genomics of Listeria species.</title>
        <authorList>
            <person name="Glaser P."/>
            <person name="Frangeul L."/>
            <person name="Buchrieser C."/>
            <person name="Rusniok C."/>
            <person name="Amend A."/>
            <person name="Baquero F."/>
            <person name="Berche P."/>
            <person name="Bloecker H."/>
            <person name="Brandt P."/>
            <person name="Chakraborty T."/>
            <person name="Charbit A."/>
            <person name="Chetouani F."/>
            <person name="Couve E."/>
            <person name="de Daruvar A."/>
            <person name="Dehoux P."/>
            <person name="Domann E."/>
            <person name="Dominguez-Bernal G."/>
            <person name="Duchaud E."/>
            <person name="Durant L."/>
            <person name="Dussurget O."/>
            <person name="Entian K.-D."/>
            <person name="Fsihi H."/>
            <person name="Garcia-del Portillo F."/>
            <person name="Garrido P."/>
            <person name="Gautier L."/>
            <person name="Goebel W."/>
            <person name="Gomez-Lopez N."/>
            <person name="Hain T."/>
            <person name="Hauf J."/>
            <person name="Jackson D."/>
            <person name="Jones L.-M."/>
            <person name="Kaerst U."/>
            <person name="Kreft J."/>
            <person name="Kuhn M."/>
            <person name="Kunst F."/>
            <person name="Kurapkat G."/>
            <person name="Madueno E."/>
            <person name="Maitournam A."/>
            <person name="Mata Vicente J."/>
            <person name="Ng E."/>
            <person name="Nedjari H."/>
            <person name="Nordsiek G."/>
            <person name="Novella S."/>
            <person name="de Pablos B."/>
            <person name="Perez-Diaz J.-C."/>
            <person name="Purcell R."/>
            <person name="Remmel B."/>
            <person name="Rose M."/>
            <person name="Schlueter T."/>
            <person name="Simoes N."/>
            <person name="Tierrez A."/>
            <person name="Vazquez-Boland J.-A."/>
            <person name="Voss H."/>
            <person name="Wehland J."/>
            <person name="Cossart P."/>
        </authorList>
    </citation>
    <scope>NUCLEOTIDE SEQUENCE [LARGE SCALE GENOMIC DNA]</scope>
    <source>
        <strain>ATCC BAA-680 / CLIP 11262</strain>
    </source>
</reference>
<sequence length="251" mass="28836">MNEAVKTLDGWFCLHDFRSIDWAAWRELNPGNQELMLNELSHFLSDMEITKNIGEGEHTIYSILGQKADLVFFTLRDSLEALNEVENRFNKLAIADYLLPTYSYISVVELSNYLASHMAGGEDPYQNKGVRARLYPALPPKKHICFYPMSKKRDGADNWYMLPMEERQKLIRDHGLIGRSYAGKVQQIIGGSIGFDDYEWGVTLFSDDALEFKRIVTEMRFDEASARYAEFGSFFIGNLLPSENLSKLFTI</sequence>
<gene>
    <name evidence="1" type="primary">chdC</name>
    <name type="ordered locus">lin2218</name>
</gene>
<evidence type="ECO:0000255" key="1">
    <source>
        <dbReference type="HAMAP-Rule" id="MF_01442"/>
    </source>
</evidence>
<protein>
    <recommendedName>
        <fullName evidence="1">Coproheme decarboxylase</fullName>
        <ecNumber evidence="1">1.3.98.5</ecNumber>
    </recommendedName>
    <alternativeName>
        <fullName evidence="1">Coproheme III oxidative decarboxylase</fullName>
    </alternativeName>
    <alternativeName>
        <fullName evidence="1">Hydrogen peroxide-dependent heme synthase</fullName>
    </alternativeName>
</protein>
<feature type="chain" id="PRO_0000294040" description="Coproheme decarboxylase">
    <location>
        <begin position="1"/>
        <end position="251"/>
    </location>
</feature>
<feature type="active site" evidence="1">
    <location>
        <position position="147"/>
    </location>
</feature>
<feature type="binding site" evidence="1">
    <location>
        <position position="133"/>
    </location>
    <ligand>
        <name>Fe-coproporphyrin III</name>
        <dbReference type="ChEBI" id="CHEBI:68438"/>
    </ligand>
</feature>
<feature type="binding site" evidence="1">
    <location>
        <begin position="147"/>
        <end position="151"/>
    </location>
    <ligand>
        <name>Fe-coproporphyrin III</name>
        <dbReference type="ChEBI" id="CHEBI:68438"/>
    </ligand>
</feature>
<feature type="binding site" description="axial binding residue" evidence="1">
    <location>
        <position position="174"/>
    </location>
    <ligand>
        <name>Fe-coproporphyrin III</name>
        <dbReference type="ChEBI" id="CHEBI:68438"/>
    </ligand>
    <ligandPart>
        <name>Fe</name>
        <dbReference type="ChEBI" id="CHEBI:18248"/>
    </ligandPart>
</feature>
<feature type="binding site" evidence="1">
    <location>
        <position position="187"/>
    </location>
    <ligand>
        <name>Fe-coproporphyrin III</name>
        <dbReference type="ChEBI" id="CHEBI:68438"/>
    </ligand>
</feature>
<feature type="binding site" evidence="1">
    <location>
        <position position="225"/>
    </location>
    <ligand>
        <name>Fe-coproporphyrin III</name>
        <dbReference type="ChEBI" id="CHEBI:68438"/>
    </ligand>
</feature>
<accession>Q929Q6</accession>
<proteinExistence type="inferred from homology"/>